<keyword id="KW-1185">Reference proteome</keyword>
<keyword id="KW-0687">Ribonucleoprotein</keyword>
<keyword id="KW-0689">Ribosomal protein</keyword>
<keyword id="KW-0694">RNA-binding</keyword>
<keyword id="KW-0699">rRNA-binding</keyword>
<sequence length="335" mass="36927">MATIHRPRRGSLAFSPRKRAKSEVPRIRSWVADERAGMAGFAGYKAGMTHVIMIDDRPRSLTEGMEISVPVTVVEVPPMSVAALRVYEPYNGGIRPAGELWAENLSQDLERAITIPKARRGASLEDIESRVDELCEIRVLAHTNPRLLTGVPKKVPDIMEIPVTGRSVEEQLKAAEGLLGSQVAVSNIFNVGEWIDVSAVTKGKGTQGPVKRWGIMLQKRKHSRTGKLRHVGNLGPWHPARISWRVPQLGQTGYHQRTEFNKRIMAIGTNGTDITPDGGFVGYGVVRNEYMLIKGSVPGPVKRLVRMRRAIRPGAAFAPKAPQILYVSKESKQGV</sequence>
<name>RL3_METTP</name>
<gene>
    <name evidence="1" type="primary">rpl3</name>
    <name type="ordered locus">Mthe_1728</name>
</gene>
<proteinExistence type="inferred from homology"/>
<reference key="1">
    <citation type="submission" date="2006-10" db="EMBL/GenBank/DDBJ databases">
        <title>Complete sequence of Methanosaeta thermophila PT.</title>
        <authorList>
            <consortium name="US DOE Joint Genome Institute"/>
            <person name="Copeland A."/>
            <person name="Lucas S."/>
            <person name="Lapidus A."/>
            <person name="Barry K."/>
            <person name="Detter J.C."/>
            <person name="Glavina del Rio T."/>
            <person name="Hammon N."/>
            <person name="Israni S."/>
            <person name="Pitluck S."/>
            <person name="Chain P."/>
            <person name="Malfatti S."/>
            <person name="Shin M."/>
            <person name="Vergez L."/>
            <person name="Schmutz J."/>
            <person name="Larimer F."/>
            <person name="Land M."/>
            <person name="Hauser L."/>
            <person name="Kyrpides N."/>
            <person name="Kim E."/>
            <person name="Smith K.S."/>
            <person name="Ingram-Smith C."/>
            <person name="Richardson P."/>
        </authorList>
    </citation>
    <scope>NUCLEOTIDE SEQUENCE [LARGE SCALE GENOMIC DNA]</scope>
    <source>
        <strain>DSM 6194 / JCM 14653 / NBRC 101360 / PT</strain>
    </source>
</reference>
<comment type="function">
    <text evidence="1">One of the primary rRNA binding proteins, it binds directly near the 3'-end of the 23S rRNA, where it nucleates assembly of the 50S subunit.</text>
</comment>
<comment type="subunit">
    <text evidence="1">Part of the 50S ribosomal subunit. Forms a cluster with proteins L14 and L24e.</text>
</comment>
<comment type="similarity">
    <text evidence="1">Belongs to the universal ribosomal protein uL3 family.</text>
</comment>
<evidence type="ECO:0000255" key="1">
    <source>
        <dbReference type="HAMAP-Rule" id="MF_01325"/>
    </source>
</evidence>
<evidence type="ECO:0000256" key="2">
    <source>
        <dbReference type="SAM" id="MobiDB-lite"/>
    </source>
</evidence>
<evidence type="ECO:0000305" key="3"/>
<protein>
    <recommendedName>
        <fullName evidence="1">Large ribosomal subunit protein uL3</fullName>
    </recommendedName>
    <alternativeName>
        <fullName evidence="3">50S ribosomal protein L3</fullName>
    </alternativeName>
</protein>
<organism>
    <name type="scientific">Methanothrix thermoacetophila (strain DSM 6194 / JCM 14653 / NBRC 101360 / PT)</name>
    <name type="common">Methanosaeta thermophila</name>
    <dbReference type="NCBI Taxonomy" id="349307"/>
    <lineage>
        <taxon>Archaea</taxon>
        <taxon>Methanobacteriati</taxon>
        <taxon>Methanobacteriota</taxon>
        <taxon>Stenosarchaea group</taxon>
        <taxon>Methanomicrobia</taxon>
        <taxon>Methanotrichales</taxon>
        <taxon>Methanotrichaceae</taxon>
        <taxon>Methanothrix</taxon>
    </lineage>
</organism>
<dbReference type="EMBL" id="CP000477">
    <property type="protein sequence ID" value="ABK15494.1"/>
    <property type="molecule type" value="Genomic_DNA"/>
</dbReference>
<dbReference type="RefSeq" id="WP_011696872.1">
    <property type="nucleotide sequence ID" value="NC_008553.1"/>
</dbReference>
<dbReference type="SMR" id="A0B9X0"/>
<dbReference type="STRING" id="349307.Mthe_1728"/>
<dbReference type="GeneID" id="4462921"/>
<dbReference type="KEGG" id="mtp:Mthe_1728"/>
<dbReference type="HOGENOM" id="CLU_033361_2_0_2"/>
<dbReference type="OrthoDB" id="6121at2157"/>
<dbReference type="Proteomes" id="UP000000674">
    <property type="component" value="Chromosome"/>
</dbReference>
<dbReference type="GO" id="GO:0022625">
    <property type="term" value="C:cytosolic large ribosomal subunit"/>
    <property type="evidence" value="ECO:0007669"/>
    <property type="project" value="TreeGrafter"/>
</dbReference>
<dbReference type="GO" id="GO:0019843">
    <property type="term" value="F:rRNA binding"/>
    <property type="evidence" value="ECO:0007669"/>
    <property type="project" value="UniProtKB-UniRule"/>
</dbReference>
<dbReference type="GO" id="GO:0003735">
    <property type="term" value="F:structural constituent of ribosome"/>
    <property type="evidence" value="ECO:0007669"/>
    <property type="project" value="InterPro"/>
</dbReference>
<dbReference type="GO" id="GO:0006412">
    <property type="term" value="P:translation"/>
    <property type="evidence" value="ECO:0007669"/>
    <property type="project" value="UniProtKB-UniRule"/>
</dbReference>
<dbReference type="Gene3D" id="3.30.1430.10">
    <property type="match status" value="1"/>
</dbReference>
<dbReference type="Gene3D" id="4.10.960.10">
    <property type="entry name" value="Ribosomal protein L3, domain 3"/>
    <property type="match status" value="1"/>
</dbReference>
<dbReference type="Gene3D" id="2.40.30.10">
    <property type="entry name" value="Translation factors"/>
    <property type="match status" value="1"/>
</dbReference>
<dbReference type="HAMAP" id="MF_01325_A">
    <property type="entry name" value="Ribosomal_uL3_A"/>
    <property type="match status" value="1"/>
</dbReference>
<dbReference type="InterPro" id="IPR045077">
    <property type="entry name" value="L3_arc_euk"/>
</dbReference>
<dbReference type="InterPro" id="IPR044892">
    <property type="entry name" value="Ribosomal_L3_dom_3_arc_sf"/>
</dbReference>
<dbReference type="InterPro" id="IPR000597">
    <property type="entry name" value="Ribosomal_uL3"/>
</dbReference>
<dbReference type="InterPro" id="IPR019928">
    <property type="entry name" value="Ribosomal_uL3_arc"/>
</dbReference>
<dbReference type="InterPro" id="IPR019926">
    <property type="entry name" value="Ribosomal_uL3_CS"/>
</dbReference>
<dbReference type="InterPro" id="IPR009000">
    <property type="entry name" value="Transl_B-barrel_sf"/>
</dbReference>
<dbReference type="NCBIfam" id="TIGR03626">
    <property type="entry name" value="L3_arch"/>
    <property type="match status" value="1"/>
</dbReference>
<dbReference type="NCBIfam" id="NF003261">
    <property type="entry name" value="PRK04231.1"/>
    <property type="match status" value="1"/>
</dbReference>
<dbReference type="PANTHER" id="PTHR11363">
    <property type="entry name" value="60S RIBOSOMAL PROTEIN L3-RELATED"/>
    <property type="match status" value="1"/>
</dbReference>
<dbReference type="PANTHER" id="PTHR11363:SF5">
    <property type="entry name" value="LARGE RIBOSOMAL SUBUNIT PROTEIN UL3"/>
    <property type="match status" value="1"/>
</dbReference>
<dbReference type="Pfam" id="PF00297">
    <property type="entry name" value="Ribosomal_L3"/>
    <property type="match status" value="1"/>
</dbReference>
<dbReference type="SUPFAM" id="SSF50447">
    <property type="entry name" value="Translation proteins"/>
    <property type="match status" value="1"/>
</dbReference>
<dbReference type="PROSITE" id="PS00474">
    <property type="entry name" value="RIBOSOMAL_L3"/>
    <property type="match status" value="1"/>
</dbReference>
<accession>A0B9X0</accession>
<feature type="chain" id="PRO_1000052084" description="Large ribosomal subunit protein uL3">
    <location>
        <begin position="1"/>
        <end position="335"/>
    </location>
</feature>
<feature type="region of interest" description="Disordered" evidence="2">
    <location>
        <begin position="1"/>
        <end position="20"/>
    </location>
</feature>